<proteinExistence type="inferred from homology"/>
<gene>
    <name evidence="1" type="primary">der</name>
    <name type="synonym">engA</name>
    <name type="ordered locus">Dgeo_2103</name>
</gene>
<name>DER_DEIGD</name>
<keyword id="KW-0342">GTP-binding</keyword>
<keyword id="KW-0547">Nucleotide-binding</keyword>
<keyword id="KW-0677">Repeat</keyword>
<keyword id="KW-0690">Ribosome biogenesis</keyword>
<organism>
    <name type="scientific">Deinococcus geothermalis (strain DSM 11300 / CIP 105573 / AG-3a)</name>
    <dbReference type="NCBI Taxonomy" id="319795"/>
    <lineage>
        <taxon>Bacteria</taxon>
        <taxon>Thermotogati</taxon>
        <taxon>Deinococcota</taxon>
        <taxon>Deinococci</taxon>
        <taxon>Deinococcales</taxon>
        <taxon>Deinococcaceae</taxon>
        <taxon>Deinococcus</taxon>
    </lineage>
</organism>
<protein>
    <recommendedName>
        <fullName evidence="1">GTPase Der</fullName>
    </recommendedName>
    <alternativeName>
        <fullName evidence="1">GTP-binding protein EngA</fullName>
    </alternativeName>
</protein>
<evidence type="ECO:0000255" key="1">
    <source>
        <dbReference type="HAMAP-Rule" id="MF_00195"/>
    </source>
</evidence>
<feature type="chain" id="PRO_1000011615" description="GTPase Der">
    <location>
        <begin position="1"/>
        <end position="441"/>
    </location>
</feature>
<feature type="domain" description="EngA-type G 1">
    <location>
        <begin position="2"/>
        <end position="164"/>
    </location>
</feature>
<feature type="domain" description="EngA-type G 2">
    <location>
        <begin position="173"/>
        <end position="343"/>
    </location>
</feature>
<feature type="domain" description="KH-like" evidence="1">
    <location>
        <begin position="344"/>
        <end position="428"/>
    </location>
</feature>
<feature type="binding site" evidence="1">
    <location>
        <begin position="8"/>
        <end position="15"/>
    </location>
    <ligand>
        <name>GTP</name>
        <dbReference type="ChEBI" id="CHEBI:37565"/>
        <label>1</label>
    </ligand>
</feature>
<feature type="binding site" evidence="1">
    <location>
        <begin position="55"/>
        <end position="59"/>
    </location>
    <ligand>
        <name>GTP</name>
        <dbReference type="ChEBI" id="CHEBI:37565"/>
        <label>1</label>
    </ligand>
</feature>
<feature type="binding site" evidence="1">
    <location>
        <begin position="116"/>
        <end position="119"/>
    </location>
    <ligand>
        <name>GTP</name>
        <dbReference type="ChEBI" id="CHEBI:37565"/>
        <label>1</label>
    </ligand>
</feature>
<feature type="binding site" evidence="1">
    <location>
        <begin position="179"/>
        <end position="186"/>
    </location>
    <ligand>
        <name>GTP</name>
        <dbReference type="ChEBI" id="CHEBI:37565"/>
        <label>2</label>
    </ligand>
</feature>
<feature type="binding site" evidence="1">
    <location>
        <begin position="226"/>
        <end position="230"/>
    </location>
    <ligand>
        <name>GTP</name>
        <dbReference type="ChEBI" id="CHEBI:37565"/>
        <label>2</label>
    </ligand>
</feature>
<feature type="binding site" evidence="1">
    <location>
        <begin position="288"/>
        <end position="291"/>
    </location>
    <ligand>
        <name>GTP</name>
        <dbReference type="ChEBI" id="CHEBI:37565"/>
        <label>2</label>
    </ligand>
</feature>
<comment type="function">
    <text evidence="1">GTPase that plays an essential role in the late steps of ribosome biogenesis.</text>
</comment>
<comment type="subunit">
    <text evidence="1">Associates with the 50S ribosomal subunit.</text>
</comment>
<comment type="similarity">
    <text evidence="1">Belongs to the TRAFAC class TrmE-Era-EngA-EngB-Septin-like GTPase superfamily. EngA (Der) GTPase family.</text>
</comment>
<dbReference type="EMBL" id="CP000359">
    <property type="protein sequence ID" value="ABF46397.1"/>
    <property type="molecule type" value="Genomic_DNA"/>
</dbReference>
<dbReference type="RefSeq" id="WP_011531223.1">
    <property type="nucleotide sequence ID" value="NC_008025.1"/>
</dbReference>
<dbReference type="SMR" id="Q1IWI7"/>
<dbReference type="STRING" id="319795.Dgeo_2103"/>
<dbReference type="KEGG" id="dge:Dgeo_2103"/>
<dbReference type="eggNOG" id="COG1160">
    <property type="taxonomic scope" value="Bacteria"/>
</dbReference>
<dbReference type="HOGENOM" id="CLU_016077_6_2_0"/>
<dbReference type="Proteomes" id="UP000002431">
    <property type="component" value="Chromosome"/>
</dbReference>
<dbReference type="GO" id="GO:0005525">
    <property type="term" value="F:GTP binding"/>
    <property type="evidence" value="ECO:0007669"/>
    <property type="project" value="UniProtKB-UniRule"/>
</dbReference>
<dbReference type="GO" id="GO:0043022">
    <property type="term" value="F:ribosome binding"/>
    <property type="evidence" value="ECO:0007669"/>
    <property type="project" value="TreeGrafter"/>
</dbReference>
<dbReference type="GO" id="GO:0042254">
    <property type="term" value="P:ribosome biogenesis"/>
    <property type="evidence" value="ECO:0007669"/>
    <property type="project" value="UniProtKB-KW"/>
</dbReference>
<dbReference type="CDD" id="cd01894">
    <property type="entry name" value="EngA1"/>
    <property type="match status" value="1"/>
</dbReference>
<dbReference type="CDD" id="cd01895">
    <property type="entry name" value="EngA2"/>
    <property type="match status" value="1"/>
</dbReference>
<dbReference type="FunFam" id="3.30.300.20:FF:000004">
    <property type="entry name" value="GTPase Der"/>
    <property type="match status" value="1"/>
</dbReference>
<dbReference type="FunFam" id="3.40.50.300:FF:000040">
    <property type="entry name" value="GTPase Der"/>
    <property type="match status" value="1"/>
</dbReference>
<dbReference type="FunFam" id="3.40.50.300:FF:000953">
    <property type="entry name" value="GTPase Der"/>
    <property type="match status" value="1"/>
</dbReference>
<dbReference type="Gene3D" id="3.30.300.20">
    <property type="match status" value="1"/>
</dbReference>
<dbReference type="Gene3D" id="3.40.50.300">
    <property type="entry name" value="P-loop containing nucleotide triphosphate hydrolases"/>
    <property type="match status" value="2"/>
</dbReference>
<dbReference type="HAMAP" id="MF_00195">
    <property type="entry name" value="GTPase_Der"/>
    <property type="match status" value="1"/>
</dbReference>
<dbReference type="InterPro" id="IPR031166">
    <property type="entry name" value="G_ENGA"/>
</dbReference>
<dbReference type="InterPro" id="IPR006073">
    <property type="entry name" value="GTP-bd"/>
</dbReference>
<dbReference type="InterPro" id="IPR016484">
    <property type="entry name" value="GTPase_Der"/>
</dbReference>
<dbReference type="InterPro" id="IPR032859">
    <property type="entry name" value="KH_dom-like"/>
</dbReference>
<dbReference type="InterPro" id="IPR015946">
    <property type="entry name" value="KH_dom-like_a/b"/>
</dbReference>
<dbReference type="InterPro" id="IPR027417">
    <property type="entry name" value="P-loop_NTPase"/>
</dbReference>
<dbReference type="InterPro" id="IPR005225">
    <property type="entry name" value="Small_GTP-bd"/>
</dbReference>
<dbReference type="NCBIfam" id="TIGR03594">
    <property type="entry name" value="GTPase_EngA"/>
    <property type="match status" value="1"/>
</dbReference>
<dbReference type="NCBIfam" id="TIGR00231">
    <property type="entry name" value="small_GTP"/>
    <property type="match status" value="2"/>
</dbReference>
<dbReference type="PANTHER" id="PTHR43834">
    <property type="entry name" value="GTPASE DER"/>
    <property type="match status" value="1"/>
</dbReference>
<dbReference type="PANTHER" id="PTHR43834:SF6">
    <property type="entry name" value="GTPASE DER"/>
    <property type="match status" value="1"/>
</dbReference>
<dbReference type="Pfam" id="PF14714">
    <property type="entry name" value="KH_dom-like"/>
    <property type="match status" value="1"/>
</dbReference>
<dbReference type="Pfam" id="PF01926">
    <property type="entry name" value="MMR_HSR1"/>
    <property type="match status" value="2"/>
</dbReference>
<dbReference type="PIRSF" id="PIRSF006485">
    <property type="entry name" value="GTP-binding_EngA"/>
    <property type="match status" value="1"/>
</dbReference>
<dbReference type="PRINTS" id="PR00326">
    <property type="entry name" value="GTP1OBG"/>
</dbReference>
<dbReference type="SUPFAM" id="SSF52540">
    <property type="entry name" value="P-loop containing nucleoside triphosphate hydrolases"/>
    <property type="match status" value="2"/>
</dbReference>
<dbReference type="PROSITE" id="PS51712">
    <property type="entry name" value="G_ENGA"/>
    <property type="match status" value="2"/>
</dbReference>
<sequence>MQKVAIVGRPNVGKSSLFNRLVGRREAVVADFPGVTRDAKEGLMLYHNHRIVLVDTGGLWSGDEWEQAIREKAEWAMEGAQAVIFVVDPREGLTAADYEVADWLRRLGKPVIVAANKIDSPKHDVYLAELWGLGFGDPVAISAEHARGLDDLMERVMAHLPADEEDVPEVAPIRISLIGRPNVGKSSLLNAITQSERAIVADQPGTTRDSLDVEWNYGGQRFVLVDTAGIRKKPDTAIEEYAIQRSEAAIERSDIIWLVVNATEIGDHELKLANLAYDSGKPVIVVVNKWDLVPDEALKQTEKELNQKLHHIAYAPRVYTSAINDYGIHDMLAEAMKLYEKWQSRIPTAELNRWLEIWQMRQAVPNFHGKPLKMYFMTQVETAPPTFAIFCNRADFVTRAYEGFLQNRIREDLGLAGIPVRLKWKEKGPYKKGKKGEEAEA</sequence>
<reference key="1">
    <citation type="submission" date="2006-04" db="EMBL/GenBank/DDBJ databases">
        <title>Complete sequence of chromosome of Deinococcus geothermalis DSM 11300.</title>
        <authorList>
            <person name="Copeland A."/>
            <person name="Lucas S."/>
            <person name="Lapidus A."/>
            <person name="Barry K."/>
            <person name="Detter J.C."/>
            <person name="Glavina del Rio T."/>
            <person name="Hammon N."/>
            <person name="Israni S."/>
            <person name="Dalin E."/>
            <person name="Tice H."/>
            <person name="Pitluck S."/>
            <person name="Brettin T."/>
            <person name="Bruce D."/>
            <person name="Han C."/>
            <person name="Tapia R."/>
            <person name="Saunders E."/>
            <person name="Gilna P."/>
            <person name="Schmutz J."/>
            <person name="Larimer F."/>
            <person name="Land M."/>
            <person name="Hauser L."/>
            <person name="Kyrpides N."/>
            <person name="Kim E."/>
            <person name="Daly M.J."/>
            <person name="Fredrickson J.K."/>
            <person name="Makarova K.S."/>
            <person name="Gaidamakova E.K."/>
            <person name="Zhai M."/>
            <person name="Richardson P."/>
        </authorList>
    </citation>
    <scope>NUCLEOTIDE SEQUENCE [LARGE SCALE GENOMIC DNA]</scope>
    <source>
        <strain>DSM 11300 / CIP 105573 / AG-3a</strain>
    </source>
</reference>
<accession>Q1IWI7</accession>